<proteinExistence type="inferred from homology"/>
<gene>
    <name type="ordered locus">Bphy_2064</name>
</gene>
<reference key="1">
    <citation type="journal article" date="2014" name="Stand. Genomic Sci.">
        <title>Complete genome sequence of Burkholderia phymatum STM815(T), a broad host range and efficient nitrogen-fixing symbiont of Mimosa species.</title>
        <authorList>
            <person name="Moulin L."/>
            <person name="Klonowska A."/>
            <person name="Caroline B."/>
            <person name="Booth K."/>
            <person name="Vriezen J.A."/>
            <person name="Melkonian R."/>
            <person name="James E.K."/>
            <person name="Young J.P."/>
            <person name="Bena G."/>
            <person name="Hauser L."/>
            <person name="Land M."/>
            <person name="Kyrpides N."/>
            <person name="Bruce D."/>
            <person name="Chain P."/>
            <person name="Copeland A."/>
            <person name="Pitluck S."/>
            <person name="Woyke T."/>
            <person name="Lizotte-Waniewski M."/>
            <person name="Bristow J."/>
            <person name="Riley M."/>
        </authorList>
    </citation>
    <scope>NUCLEOTIDE SEQUENCE [LARGE SCALE GENOMIC DNA]</scope>
    <source>
        <strain>DSM 17167 / CIP 108236 / LMG 21445 / STM815</strain>
    </source>
</reference>
<sequence length="242" mass="26085">MAGHSKWANIKHKKAAADAKKGKVWTRLIKEIQVAARMGGGDIDSNPRLRLAVDKAYDANMPKDNINRAIQRGVGGVDGANYEEIRYEGYGIGGAAIIVDTMTDNRTRTVAEVRHAFSKFGGNMGTDGSVSFMFDHVGQFLFAPGTPEDKLMDAALEAGADDVVTNEDGSIEVICPPNDFSKVKAALETAGFKAELAEVTMKPQTEVEFAGDDAVKMQKLLDALENLDDVQEVYTNAAIADE</sequence>
<name>Y2064_PARP8</name>
<organism>
    <name type="scientific">Paraburkholderia phymatum (strain DSM 17167 / CIP 108236 / LMG 21445 / STM815)</name>
    <name type="common">Burkholderia phymatum</name>
    <dbReference type="NCBI Taxonomy" id="391038"/>
    <lineage>
        <taxon>Bacteria</taxon>
        <taxon>Pseudomonadati</taxon>
        <taxon>Pseudomonadota</taxon>
        <taxon>Betaproteobacteria</taxon>
        <taxon>Burkholderiales</taxon>
        <taxon>Burkholderiaceae</taxon>
        <taxon>Paraburkholderia</taxon>
    </lineage>
</organism>
<keyword id="KW-0963">Cytoplasm</keyword>
<keyword id="KW-0238">DNA-binding</keyword>
<keyword id="KW-1185">Reference proteome</keyword>
<keyword id="KW-0804">Transcription</keyword>
<keyword id="KW-0805">Transcription regulation</keyword>
<dbReference type="EMBL" id="CP001043">
    <property type="protein sequence ID" value="ACC71242.1"/>
    <property type="molecule type" value="Genomic_DNA"/>
</dbReference>
<dbReference type="RefSeq" id="WP_012401448.1">
    <property type="nucleotide sequence ID" value="NC_010622.1"/>
</dbReference>
<dbReference type="SMR" id="B2JE34"/>
<dbReference type="STRING" id="391038.Bphy_2064"/>
<dbReference type="KEGG" id="bph:Bphy_2064"/>
<dbReference type="eggNOG" id="COG0217">
    <property type="taxonomic scope" value="Bacteria"/>
</dbReference>
<dbReference type="HOGENOM" id="CLU_062974_2_2_4"/>
<dbReference type="OrthoDB" id="9781053at2"/>
<dbReference type="Proteomes" id="UP000001192">
    <property type="component" value="Chromosome 1"/>
</dbReference>
<dbReference type="GO" id="GO:0005829">
    <property type="term" value="C:cytosol"/>
    <property type="evidence" value="ECO:0007669"/>
    <property type="project" value="TreeGrafter"/>
</dbReference>
<dbReference type="GO" id="GO:0003677">
    <property type="term" value="F:DNA binding"/>
    <property type="evidence" value="ECO:0007669"/>
    <property type="project" value="UniProtKB-UniRule"/>
</dbReference>
<dbReference type="GO" id="GO:0006355">
    <property type="term" value="P:regulation of DNA-templated transcription"/>
    <property type="evidence" value="ECO:0007669"/>
    <property type="project" value="UniProtKB-UniRule"/>
</dbReference>
<dbReference type="FunFam" id="1.10.10.200:FF:000001">
    <property type="entry name" value="Probable transcriptional regulatory protein YebC"/>
    <property type="match status" value="1"/>
</dbReference>
<dbReference type="FunFam" id="3.30.70.980:FF:000002">
    <property type="entry name" value="Probable transcriptional regulatory protein YebC"/>
    <property type="match status" value="1"/>
</dbReference>
<dbReference type="Gene3D" id="1.10.10.200">
    <property type="match status" value="1"/>
</dbReference>
<dbReference type="Gene3D" id="3.30.70.980">
    <property type="match status" value="2"/>
</dbReference>
<dbReference type="HAMAP" id="MF_00693">
    <property type="entry name" value="Transcrip_reg_TACO1"/>
    <property type="match status" value="1"/>
</dbReference>
<dbReference type="InterPro" id="IPR017856">
    <property type="entry name" value="Integrase-like_N"/>
</dbReference>
<dbReference type="InterPro" id="IPR048300">
    <property type="entry name" value="TACO1_YebC-like_2nd/3rd_dom"/>
</dbReference>
<dbReference type="InterPro" id="IPR049083">
    <property type="entry name" value="TACO1_YebC_N"/>
</dbReference>
<dbReference type="InterPro" id="IPR002876">
    <property type="entry name" value="Transcrip_reg_TACO1-like"/>
</dbReference>
<dbReference type="InterPro" id="IPR026564">
    <property type="entry name" value="Transcrip_reg_TACO1-like_dom3"/>
</dbReference>
<dbReference type="InterPro" id="IPR029072">
    <property type="entry name" value="YebC-like"/>
</dbReference>
<dbReference type="NCBIfam" id="NF001030">
    <property type="entry name" value="PRK00110.1"/>
    <property type="match status" value="1"/>
</dbReference>
<dbReference type="NCBIfam" id="NF009044">
    <property type="entry name" value="PRK12378.1"/>
    <property type="match status" value="1"/>
</dbReference>
<dbReference type="NCBIfam" id="TIGR01033">
    <property type="entry name" value="YebC/PmpR family DNA-binding transcriptional regulator"/>
    <property type="match status" value="1"/>
</dbReference>
<dbReference type="PANTHER" id="PTHR12532:SF6">
    <property type="entry name" value="TRANSCRIPTIONAL REGULATORY PROTEIN YEBC-RELATED"/>
    <property type="match status" value="1"/>
</dbReference>
<dbReference type="PANTHER" id="PTHR12532">
    <property type="entry name" value="TRANSLATIONAL ACTIVATOR OF CYTOCHROME C OXIDASE 1"/>
    <property type="match status" value="1"/>
</dbReference>
<dbReference type="Pfam" id="PF20772">
    <property type="entry name" value="TACO1_YebC_N"/>
    <property type="match status" value="1"/>
</dbReference>
<dbReference type="Pfam" id="PF01709">
    <property type="entry name" value="Transcrip_reg"/>
    <property type="match status" value="1"/>
</dbReference>
<dbReference type="SUPFAM" id="SSF75625">
    <property type="entry name" value="YebC-like"/>
    <property type="match status" value="1"/>
</dbReference>
<accession>B2JE34</accession>
<evidence type="ECO:0000255" key="1">
    <source>
        <dbReference type="HAMAP-Rule" id="MF_00693"/>
    </source>
</evidence>
<protein>
    <recommendedName>
        <fullName evidence="1">Probable transcriptional regulatory protein Bphy_2064</fullName>
    </recommendedName>
</protein>
<comment type="subcellular location">
    <subcellularLocation>
        <location evidence="1">Cytoplasm</location>
    </subcellularLocation>
</comment>
<comment type="similarity">
    <text evidence="1">Belongs to the TACO1 family.</text>
</comment>
<feature type="chain" id="PRO_1000132166" description="Probable transcriptional regulatory protein Bphy_2064">
    <location>
        <begin position="1"/>
        <end position="242"/>
    </location>
</feature>